<evidence type="ECO:0000250" key="1"/>
<evidence type="ECO:0000305" key="2"/>
<sequence length="470" mass="54520">MNRQIANILENYLGRYPSLNEYHTLKSQYRNIQKVNIFNKDIFISLLRKNKKKFFSDLVCTQSDIKHSVLSYFSKQENTYSIGKLYTIIELQTILVTTYTDVLGVLTTKGPDIFSSTIYYNISSIKKLATDIVHAMMITTVSDKIMGRHNVSSLVGNVNTLMEEYLRRHNKNCICYGSYSLHLLNPDVRYGDIDILQTNSRTFLIDLAFLIKFITGYNVVLLKVPYLKNYMVLKDHNDNHIIDSFNIRQDTMETIPKILIDNIYIVDPVLQLMSMLKMFSQIDRLEDIVKNPDKVIIRLATLLEYVRINYGIILNGDHGNMPMLSTFNHDQRIITVQTNMYNFPFKKCFIYLDENTLSRDILHLNADDAVDFENVSNSAYLIHNDTMYTYFSNTILLRSENEIHEISTRAISAHILLYQILTKGDIIQPLSDIINSLISIEKCTIYKVIQRDKKTGKHGIIDIEKDIITH</sequence>
<organismHost>
    <name type="scientific">Sus scrofa</name>
    <name type="common">Pig</name>
    <dbReference type="NCBI Taxonomy" id="9823"/>
</organismHost>
<protein>
    <recommendedName>
        <fullName>Poly(A) polymerase catalytic subunit</fullName>
        <ecNumber>2.7.7.19</ecNumber>
    </recommendedName>
    <alternativeName>
        <fullName>Poly(A) polymerase large subunit</fullName>
        <shortName>PAP-L</shortName>
    </alternativeName>
</protein>
<gene>
    <name type="primary">PAPL</name>
    <name type="ordered locus">SPV030</name>
</gene>
<comment type="function">
    <text>Polymerase that creates the 3'-poly(A) tail of mRNA's.</text>
</comment>
<comment type="catalytic activity">
    <reaction>
        <text>RNA(n) + ATP = RNA(n)-3'-adenine ribonucleotide + diphosphate</text>
        <dbReference type="Rhea" id="RHEA:11332"/>
        <dbReference type="Rhea" id="RHEA-COMP:14527"/>
        <dbReference type="Rhea" id="RHEA-COMP:17347"/>
        <dbReference type="ChEBI" id="CHEBI:30616"/>
        <dbReference type="ChEBI" id="CHEBI:33019"/>
        <dbReference type="ChEBI" id="CHEBI:140395"/>
        <dbReference type="ChEBI" id="CHEBI:173115"/>
        <dbReference type="EC" id="2.7.7.19"/>
    </reaction>
</comment>
<comment type="subunit">
    <text evidence="1">Heterodimer of a large (catalytic) subunit and a small (regulatory) subunit.</text>
</comment>
<comment type="similarity">
    <text evidence="2">Belongs to the poxviridae poly(A) polymerase catalytic subunit family.</text>
</comment>
<proteinExistence type="inferred from homology"/>
<organism>
    <name type="scientific">Swinepox virus (strain Swine/Nebraska/17077-99/1999)</name>
    <name type="common">SWPV</name>
    <dbReference type="NCBI Taxonomy" id="300880"/>
    <lineage>
        <taxon>Viruses</taxon>
        <taxon>Varidnaviria</taxon>
        <taxon>Bamfordvirae</taxon>
        <taxon>Nucleocytoviricota</taxon>
        <taxon>Pokkesviricetes</taxon>
        <taxon>Chitovirales</taxon>
        <taxon>Poxviridae</taxon>
        <taxon>Chordopoxvirinae</taxon>
        <taxon>Suipoxvirus</taxon>
        <taxon>Swinepox virus</taxon>
    </lineage>
</organism>
<dbReference type="EC" id="2.7.7.19"/>
<dbReference type="EMBL" id="AF410153">
    <property type="protein sequence ID" value="AAL69769.1"/>
    <property type="molecule type" value="Genomic_DNA"/>
</dbReference>
<dbReference type="RefSeq" id="NP_570190.1">
    <property type="nucleotide sequence ID" value="NC_003389.1"/>
</dbReference>
<dbReference type="SMR" id="Q8V3R4"/>
<dbReference type="GeneID" id="932422"/>
<dbReference type="KEGG" id="vg:932422"/>
<dbReference type="Proteomes" id="UP000000871">
    <property type="component" value="Segment"/>
</dbReference>
<dbReference type="GO" id="GO:0005524">
    <property type="term" value="F:ATP binding"/>
    <property type="evidence" value="ECO:0007669"/>
    <property type="project" value="UniProtKB-KW"/>
</dbReference>
<dbReference type="GO" id="GO:1990817">
    <property type="term" value="F:poly(A) RNA polymerase activity"/>
    <property type="evidence" value="ECO:0007669"/>
    <property type="project" value="UniProtKB-EC"/>
</dbReference>
<dbReference type="GO" id="GO:0006397">
    <property type="term" value="P:mRNA processing"/>
    <property type="evidence" value="ECO:0007669"/>
    <property type="project" value="UniProtKB-KW"/>
</dbReference>
<dbReference type="CDD" id="cd20919">
    <property type="entry name" value="polyA_pol_Pox"/>
    <property type="match status" value="1"/>
</dbReference>
<dbReference type="Gene3D" id="1.20.1270.320">
    <property type="entry name" value="Poxvirus poly(A) polymerase, N domain"/>
    <property type="match status" value="1"/>
</dbReference>
<dbReference type="Gene3D" id="3.30.460.60">
    <property type="entry name" value="Poxvirus poly(A) polymerase, nucleotidyltransferase domain"/>
    <property type="match status" value="1"/>
</dbReference>
<dbReference type="InterPro" id="IPR004976">
    <property type="entry name" value="PolyA_pol_cat_Poxvir"/>
</dbReference>
<dbReference type="InterPro" id="IPR037265">
    <property type="entry name" value="PolyA_pol_cat_sf"/>
</dbReference>
<dbReference type="InterPro" id="IPR024231">
    <property type="entry name" value="PolyA_pol_nucTrfase_Poxvir"/>
</dbReference>
<dbReference type="InterPro" id="IPR038419">
    <property type="entry name" value="PolyA_pol_nucTrfase_sf_Poxvir"/>
</dbReference>
<dbReference type="InterPro" id="IPR024397">
    <property type="entry name" value="Poxvirus_polyA_pol_cat_C"/>
</dbReference>
<dbReference type="InterPro" id="IPR024398">
    <property type="entry name" value="Poxvirus_polyA_pol_cat_N"/>
</dbReference>
<dbReference type="InterPro" id="IPR038337">
    <property type="entry name" value="Poxvirus_polyA_pol_cat_N_sf"/>
</dbReference>
<dbReference type="Pfam" id="PF03296">
    <property type="entry name" value="Pox_polyA_pol"/>
    <property type="match status" value="1"/>
</dbReference>
<dbReference type="Pfam" id="PF12629">
    <property type="entry name" value="Pox_polyA_pol_C"/>
    <property type="match status" value="1"/>
</dbReference>
<dbReference type="Pfam" id="PF12630">
    <property type="entry name" value="Pox_polyA_pol_N"/>
    <property type="match status" value="1"/>
</dbReference>
<dbReference type="PIRSF" id="PIRSF015693">
    <property type="entry name" value="VAC-48L_nuct"/>
    <property type="match status" value="1"/>
</dbReference>
<dbReference type="SUPFAM" id="SSF160957">
    <property type="entry name" value="Poly(A) polymerase catalytic subunit-like"/>
    <property type="match status" value="1"/>
</dbReference>
<feature type="chain" id="PRO_0000308940" description="Poly(A) polymerase catalytic subunit">
    <location>
        <begin position="1"/>
        <end position="470"/>
    </location>
</feature>
<feature type="active site" evidence="1">
    <location>
        <position position="192"/>
    </location>
</feature>
<feature type="active site" evidence="1">
    <location>
        <position position="194"/>
    </location>
</feature>
<name>PAP1_SWPV1</name>
<accession>Q8V3R4</accession>
<reference key="1">
    <citation type="journal article" date="2002" name="J. Virol.">
        <title>The genome of swinepox virus.</title>
        <authorList>
            <person name="Afonso C.L."/>
            <person name="Tulman E.R."/>
            <person name="Lu Z."/>
            <person name="Zsak L."/>
            <person name="Osorio F.A."/>
            <person name="Balinsky C."/>
            <person name="Kutish G.F."/>
            <person name="Rock D.L."/>
        </authorList>
    </citation>
    <scope>NUCLEOTIDE SEQUENCE [LARGE SCALE GENOMIC DNA]</scope>
</reference>
<keyword id="KW-0067">ATP-binding</keyword>
<keyword id="KW-0507">mRNA processing</keyword>
<keyword id="KW-0547">Nucleotide-binding</keyword>
<keyword id="KW-1185">Reference proteome</keyword>
<keyword id="KW-0804">Transcription</keyword>
<keyword id="KW-0808">Transferase</keyword>